<sequence>MVREKVTVSTRTLQWKCVESRTDSKRLYYGRFILSPLMKGQADTIGIAMRRALLGEIEGTCITRVKSEKVPHEYSTITGIQESVHEILMNLKEIILRSNLYGTSDASICVKGPGSVTAQDIILPPYVEIVDNTQHIASLTEPIDFCIGLQIERNRGYLIKTPHNFQDGSYPIDAVFMPVRNANHSIHSYGNGNEKQEILFLEIWTNGSLTPKEALHEASRNLIDLFIPFLHMEEDNLYLQDNQHTVPLSPFTFHDKLAKLIKNKKKIALKSIFIDQSELPSRIYNCLKMSNIYTLLDLLNNSQEDLMKIEHFRSEDVKRILGILEKYFVIDLAKNKF</sequence>
<feature type="chain" id="PRO_0000175502" description="DNA-directed RNA polymerase subunit alpha">
    <location>
        <begin position="1"/>
        <end position="337"/>
    </location>
</feature>
<feature type="region of interest" description="Alpha N-terminal domain (alpha-NTD)" evidence="1">
    <location>
        <begin position="10"/>
        <end position="233"/>
    </location>
</feature>
<feature type="region of interest" description="Alpha C-terminal domain (alpha-CTD)" evidence="1">
    <location>
        <begin position="265"/>
        <end position="337"/>
    </location>
</feature>
<keyword id="KW-0002">3D-structure</keyword>
<keyword id="KW-0150">Chloroplast</keyword>
<keyword id="KW-0240">DNA-directed RNA polymerase</keyword>
<keyword id="KW-0548">Nucleotidyltransferase</keyword>
<keyword id="KW-0934">Plastid</keyword>
<keyword id="KW-1185">Reference proteome</keyword>
<keyword id="KW-0804">Transcription</keyword>
<keyword id="KW-0808">Transferase</keyword>
<name>RPOA_TOBAC</name>
<accession>P06269</accession>
<reference key="1">
    <citation type="journal article" date="1986" name="EMBO J.">
        <title>The complete nucleotide sequence of the tobacco chloroplast genome: its gene organization and expression.</title>
        <authorList>
            <person name="Shinozaki K."/>
            <person name="Ohme M."/>
            <person name="Tanaka M."/>
            <person name="Wakasugi T."/>
            <person name="Hayashida N."/>
            <person name="Matsubayashi T."/>
            <person name="Zaita N."/>
            <person name="Chunwongse J."/>
            <person name="Obokata J."/>
            <person name="Yamaguchi-Shinozaki K."/>
            <person name="Ohto C."/>
            <person name="Torazawa K."/>
            <person name="Meng B.-Y."/>
            <person name="Sugita M."/>
            <person name="Deno H."/>
            <person name="Kamogashira T."/>
            <person name="Yamada K."/>
            <person name="Kusuda J."/>
            <person name="Takaiwa F."/>
            <person name="Kato A."/>
            <person name="Tohdoh N."/>
            <person name="Shimada H."/>
            <person name="Sugiura M."/>
        </authorList>
    </citation>
    <scope>NUCLEOTIDE SEQUENCE [LARGE SCALE GENOMIC DNA]</scope>
    <source>
        <strain>cv. Bright Yellow 4</strain>
    </source>
</reference>
<geneLocation type="chloroplast"/>
<comment type="function">
    <text evidence="1">DNA-dependent RNA polymerase catalyzes the transcription of DNA into RNA using the four ribonucleoside triphosphates as substrates.</text>
</comment>
<comment type="catalytic activity">
    <reaction evidence="1">
        <text>RNA(n) + a ribonucleoside 5'-triphosphate = RNA(n+1) + diphosphate</text>
        <dbReference type="Rhea" id="RHEA:21248"/>
        <dbReference type="Rhea" id="RHEA-COMP:14527"/>
        <dbReference type="Rhea" id="RHEA-COMP:17342"/>
        <dbReference type="ChEBI" id="CHEBI:33019"/>
        <dbReference type="ChEBI" id="CHEBI:61557"/>
        <dbReference type="ChEBI" id="CHEBI:140395"/>
        <dbReference type="EC" id="2.7.7.6"/>
    </reaction>
</comment>
<comment type="subunit">
    <text evidence="1">In plastids the minimal PEP RNA polymerase catalytic core is composed of four subunits: alpha, beta, beta', and beta''. When a (nuclear-encoded) sigma factor is associated with the core the holoenzyme is formed, which can initiate transcription.</text>
</comment>
<comment type="subcellular location">
    <subcellularLocation>
        <location>Plastid</location>
        <location>Chloroplast</location>
    </subcellularLocation>
</comment>
<comment type="domain">
    <text evidence="1">The N-terminal domain is essential for RNAP assembly and basal transcription, whereas the C-terminal domain is involved in interaction with transcriptional regulators and with upstream promoter elements.</text>
</comment>
<comment type="similarity">
    <text evidence="1">Belongs to the RNA polymerase alpha chain family.</text>
</comment>
<evidence type="ECO:0000255" key="1">
    <source>
        <dbReference type="HAMAP-Rule" id="MF_00059"/>
    </source>
</evidence>
<gene>
    <name evidence="1" type="primary">rpoA</name>
</gene>
<dbReference type="EC" id="2.7.7.6" evidence="1"/>
<dbReference type="EMBL" id="Z00044">
    <property type="protein sequence ID" value="CAA77376.1"/>
    <property type="molecule type" value="Genomic_DNA"/>
</dbReference>
<dbReference type="PIR" id="A00686">
    <property type="entry name" value="RNNTA"/>
</dbReference>
<dbReference type="RefSeq" id="NP_054532.1">
    <property type="nucleotide sequence ID" value="NC_001879.2"/>
</dbReference>
<dbReference type="PDB" id="8W9Z">
    <property type="method" value="EM"/>
    <property type="resolution" value="3.00 A"/>
    <property type="chains" value="A/a=1-337"/>
</dbReference>
<dbReference type="PDB" id="8WA0">
    <property type="method" value="EM"/>
    <property type="resolution" value="2.70 A"/>
    <property type="chains" value="A/a=1-337"/>
</dbReference>
<dbReference type="PDB" id="8WA1">
    <property type="method" value="EM"/>
    <property type="resolution" value="2.80 A"/>
    <property type="chains" value="A/a=1-337"/>
</dbReference>
<dbReference type="PDBsum" id="8W9Z"/>
<dbReference type="PDBsum" id="8WA0"/>
<dbReference type="PDBsum" id="8WA1"/>
<dbReference type="EMDB" id="EMD-37386"/>
<dbReference type="EMDB" id="EMD-37387"/>
<dbReference type="EMDB" id="EMD-37388"/>
<dbReference type="SMR" id="P06269"/>
<dbReference type="GeneID" id="800443"/>
<dbReference type="KEGG" id="nta:800443"/>
<dbReference type="OMA" id="PIKNVKY"/>
<dbReference type="OrthoDB" id="1586219at2759"/>
<dbReference type="BRENDA" id="2.7.7.6">
    <property type="organism ID" value="3645"/>
</dbReference>
<dbReference type="Proteomes" id="UP000084051">
    <property type="component" value="Unplaced"/>
</dbReference>
<dbReference type="GO" id="GO:0009507">
    <property type="term" value="C:chloroplast"/>
    <property type="evidence" value="ECO:0007669"/>
    <property type="project" value="UniProtKB-SubCell"/>
</dbReference>
<dbReference type="GO" id="GO:0000428">
    <property type="term" value="C:DNA-directed RNA polymerase complex"/>
    <property type="evidence" value="ECO:0007669"/>
    <property type="project" value="UniProtKB-KW"/>
</dbReference>
<dbReference type="GO" id="GO:0005739">
    <property type="term" value="C:mitochondrion"/>
    <property type="evidence" value="ECO:0007669"/>
    <property type="project" value="GOC"/>
</dbReference>
<dbReference type="GO" id="GO:0003677">
    <property type="term" value="F:DNA binding"/>
    <property type="evidence" value="ECO:0007669"/>
    <property type="project" value="UniProtKB-UniRule"/>
</dbReference>
<dbReference type="GO" id="GO:0003899">
    <property type="term" value="F:DNA-directed RNA polymerase activity"/>
    <property type="evidence" value="ECO:0007669"/>
    <property type="project" value="UniProtKB-UniRule"/>
</dbReference>
<dbReference type="GO" id="GO:0046983">
    <property type="term" value="F:protein dimerization activity"/>
    <property type="evidence" value="ECO:0007669"/>
    <property type="project" value="InterPro"/>
</dbReference>
<dbReference type="GO" id="GO:0006351">
    <property type="term" value="P:DNA-templated transcription"/>
    <property type="evidence" value="ECO:0007669"/>
    <property type="project" value="UniProtKB-UniRule"/>
</dbReference>
<dbReference type="CDD" id="cd06928">
    <property type="entry name" value="RNAP_alpha_NTD"/>
    <property type="match status" value="1"/>
</dbReference>
<dbReference type="FunFam" id="1.10.150.20:FF:000021">
    <property type="entry name" value="DNA-directed RNA polymerase subunit alpha"/>
    <property type="match status" value="1"/>
</dbReference>
<dbReference type="FunFam" id="2.170.120.12:FF:000001">
    <property type="entry name" value="DNA-directed RNA polymerase subunit alpha"/>
    <property type="match status" value="1"/>
</dbReference>
<dbReference type="FunFam" id="3.30.1360.10:FF:000039">
    <property type="entry name" value="DNA-directed RNA polymerase subunit alpha"/>
    <property type="match status" value="1"/>
</dbReference>
<dbReference type="Gene3D" id="1.10.150.20">
    <property type="entry name" value="5' to 3' exonuclease, C-terminal subdomain"/>
    <property type="match status" value="1"/>
</dbReference>
<dbReference type="Gene3D" id="2.170.120.12">
    <property type="entry name" value="DNA-directed RNA polymerase, insert domain"/>
    <property type="match status" value="1"/>
</dbReference>
<dbReference type="Gene3D" id="3.30.1360.10">
    <property type="entry name" value="RNA polymerase, RBP11-like subunit"/>
    <property type="match status" value="1"/>
</dbReference>
<dbReference type="HAMAP" id="MF_00059">
    <property type="entry name" value="RNApol_bact_RpoA"/>
    <property type="match status" value="1"/>
</dbReference>
<dbReference type="InterPro" id="IPR011262">
    <property type="entry name" value="DNA-dir_RNA_pol_insert"/>
</dbReference>
<dbReference type="InterPro" id="IPR011263">
    <property type="entry name" value="DNA-dir_RNA_pol_RpoA/D/Rpb3"/>
</dbReference>
<dbReference type="InterPro" id="IPR011773">
    <property type="entry name" value="DNA-dir_RpoA"/>
</dbReference>
<dbReference type="InterPro" id="IPR036603">
    <property type="entry name" value="RBP11-like"/>
</dbReference>
<dbReference type="InterPro" id="IPR011260">
    <property type="entry name" value="RNAP_asu_C"/>
</dbReference>
<dbReference type="InterPro" id="IPR036643">
    <property type="entry name" value="RNApol_insert_sf"/>
</dbReference>
<dbReference type="NCBIfam" id="TIGR02027">
    <property type="entry name" value="rpoA"/>
    <property type="match status" value="1"/>
</dbReference>
<dbReference type="Pfam" id="PF01000">
    <property type="entry name" value="RNA_pol_A_bac"/>
    <property type="match status" value="1"/>
</dbReference>
<dbReference type="Pfam" id="PF03118">
    <property type="entry name" value="RNA_pol_A_CTD"/>
    <property type="match status" value="1"/>
</dbReference>
<dbReference type="Pfam" id="PF01193">
    <property type="entry name" value="RNA_pol_L"/>
    <property type="match status" value="1"/>
</dbReference>
<dbReference type="SMART" id="SM00662">
    <property type="entry name" value="RPOLD"/>
    <property type="match status" value="1"/>
</dbReference>
<dbReference type="SUPFAM" id="SSF47789">
    <property type="entry name" value="C-terminal domain of RNA polymerase alpha subunit"/>
    <property type="match status" value="1"/>
</dbReference>
<dbReference type="SUPFAM" id="SSF56553">
    <property type="entry name" value="Insert subdomain of RNA polymerase alpha subunit"/>
    <property type="match status" value="1"/>
</dbReference>
<dbReference type="SUPFAM" id="SSF55257">
    <property type="entry name" value="RBP11-like subunits of RNA polymerase"/>
    <property type="match status" value="1"/>
</dbReference>
<protein>
    <recommendedName>
        <fullName evidence="1">DNA-directed RNA polymerase subunit alpha</fullName>
        <shortName evidence="1">PEP</shortName>
        <ecNumber evidence="1">2.7.7.6</ecNumber>
    </recommendedName>
    <alternativeName>
        <fullName evidence="1">Plastid-encoded RNA polymerase subunit alpha</fullName>
        <shortName evidence="1">RNA polymerase subunit alpha</shortName>
    </alternativeName>
</protein>
<organism>
    <name type="scientific">Nicotiana tabacum</name>
    <name type="common">Common tobacco</name>
    <dbReference type="NCBI Taxonomy" id="4097"/>
    <lineage>
        <taxon>Eukaryota</taxon>
        <taxon>Viridiplantae</taxon>
        <taxon>Streptophyta</taxon>
        <taxon>Embryophyta</taxon>
        <taxon>Tracheophyta</taxon>
        <taxon>Spermatophyta</taxon>
        <taxon>Magnoliopsida</taxon>
        <taxon>eudicotyledons</taxon>
        <taxon>Gunneridae</taxon>
        <taxon>Pentapetalae</taxon>
        <taxon>asterids</taxon>
        <taxon>lamiids</taxon>
        <taxon>Solanales</taxon>
        <taxon>Solanaceae</taxon>
        <taxon>Nicotianoideae</taxon>
        <taxon>Nicotianeae</taxon>
        <taxon>Nicotiana</taxon>
    </lineage>
</organism>
<proteinExistence type="evidence at protein level"/>